<sequence>MRIAPYGTGSVVKTAIFCFVIFITALFLPQPGGVILATAALGFLLFTLYFYRDPERKIPDGKGLVIAPADGKIVLKQTLDHPVTGPGSTLVSIFMSPFNVHVNRIPVDGLVRDLRYHEGKFLMAFDHRSMTDNERMEITLDTAAGPLWFCQVSGFVARRIVCDLEAGQEVASGKRFGMIKLGSRVDIVLPSSIQIKVKEGMKTTAGETILGQTGGF</sequence>
<gene>
    <name evidence="1" type="primary">psd</name>
    <name type="ordered locus">CT1615</name>
</gene>
<comment type="function">
    <text evidence="1">Catalyzes the formation of phosphatidylethanolamine (PtdEtn) from phosphatidylserine (PtdSer).</text>
</comment>
<comment type="catalytic activity">
    <reaction evidence="1">
        <text>a 1,2-diacyl-sn-glycero-3-phospho-L-serine + H(+) = a 1,2-diacyl-sn-glycero-3-phosphoethanolamine + CO2</text>
        <dbReference type="Rhea" id="RHEA:20828"/>
        <dbReference type="ChEBI" id="CHEBI:15378"/>
        <dbReference type="ChEBI" id="CHEBI:16526"/>
        <dbReference type="ChEBI" id="CHEBI:57262"/>
        <dbReference type="ChEBI" id="CHEBI:64612"/>
        <dbReference type="EC" id="4.1.1.65"/>
    </reaction>
</comment>
<comment type="cofactor">
    <cofactor evidence="1">
        <name>pyruvate</name>
        <dbReference type="ChEBI" id="CHEBI:15361"/>
    </cofactor>
    <text evidence="1">Binds 1 pyruvoyl group covalently per subunit.</text>
</comment>
<comment type="pathway">
    <text evidence="1">Phospholipid metabolism; phosphatidylethanolamine biosynthesis; phosphatidylethanolamine from CDP-diacylglycerol: step 2/2.</text>
</comment>
<comment type="subunit">
    <text evidence="1">Heterodimer of a large membrane-associated beta subunit and a small pyruvoyl-containing alpha subunit.</text>
</comment>
<comment type="subcellular location">
    <subcellularLocation>
        <location evidence="1">Cell membrane</location>
        <topology evidence="1">Peripheral membrane protein</topology>
    </subcellularLocation>
</comment>
<comment type="PTM">
    <text evidence="1">Is synthesized initially as an inactive proenzyme. Formation of the active enzyme involves a self-maturation process in which the active site pyruvoyl group is generated from an internal serine residue via an autocatalytic post-translational modification. Two non-identical subunits are generated from the proenzyme in this reaction, and the pyruvate is formed at the N-terminus of the alpha chain, which is derived from the carboxyl end of the proenzyme. The post-translation cleavage follows an unusual pathway, termed non-hydrolytic serinolysis, in which the side chain hydroxyl group of the serine supplies its oxygen atom to form the C-terminus of the beta chain, while the remainder of the serine residue undergoes an oxidative deamination to produce ammonia and the pyruvoyl prosthetic group on the alpha chain.</text>
</comment>
<comment type="similarity">
    <text evidence="1">Belongs to the phosphatidylserine decarboxylase family. PSD-A subfamily.</text>
</comment>
<accession>Q93SU4</accession>
<feature type="chain" id="PRO_0000029767" description="Phosphatidylserine decarboxylase beta chain" evidence="1">
    <location>
        <begin position="1"/>
        <end position="182"/>
    </location>
</feature>
<feature type="chain" id="PRO_0000029768" description="Phosphatidylserine decarboxylase alpha chain" evidence="1">
    <location>
        <begin position="183"/>
        <end position="216"/>
    </location>
</feature>
<feature type="active site" description="Schiff-base intermediate with substrate; via pyruvic acid" evidence="1">
    <location>
        <position position="183"/>
    </location>
</feature>
<feature type="site" description="Cleavage (non-hydrolytic); by autocatalysis" evidence="1">
    <location>
        <begin position="182"/>
        <end position="183"/>
    </location>
</feature>
<feature type="modified residue" description="Pyruvic acid (Ser); by autocatalysis" evidence="1">
    <location>
        <position position="183"/>
    </location>
</feature>
<proteinExistence type="inferred from homology"/>
<keyword id="KW-1003">Cell membrane</keyword>
<keyword id="KW-0210">Decarboxylase</keyword>
<keyword id="KW-0444">Lipid biosynthesis</keyword>
<keyword id="KW-0443">Lipid metabolism</keyword>
<keyword id="KW-0456">Lyase</keyword>
<keyword id="KW-0472">Membrane</keyword>
<keyword id="KW-0594">Phospholipid biosynthesis</keyword>
<keyword id="KW-1208">Phospholipid metabolism</keyword>
<keyword id="KW-0670">Pyruvate</keyword>
<keyword id="KW-1185">Reference proteome</keyword>
<keyword id="KW-0865">Zymogen</keyword>
<reference key="1">
    <citation type="journal article" date="2000" name="Science">
        <title>Molecular evidence for the early evolution of photosynthesis.</title>
        <authorList>
            <person name="Xiong J."/>
            <person name="Fischer W.M."/>
            <person name="Inoue K."/>
            <person name="Nakahara M."/>
            <person name="Bauer C.E."/>
        </authorList>
    </citation>
    <scope>NUCLEOTIDE SEQUENCE [GENOMIC DNA]</scope>
</reference>
<reference key="2">
    <citation type="journal article" date="2002" name="Proc. Natl. Acad. Sci. U.S.A.">
        <title>The complete genome sequence of Chlorobium tepidum TLS, a photosynthetic, anaerobic, green-sulfur bacterium.</title>
        <authorList>
            <person name="Eisen J.A."/>
            <person name="Nelson K.E."/>
            <person name="Paulsen I.T."/>
            <person name="Heidelberg J.F."/>
            <person name="Wu M."/>
            <person name="Dodson R.J."/>
            <person name="DeBoy R.T."/>
            <person name="Gwinn M.L."/>
            <person name="Nelson W.C."/>
            <person name="Haft D.H."/>
            <person name="Hickey E.K."/>
            <person name="Peterson J.D."/>
            <person name="Durkin A.S."/>
            <person name="Kolonay J.F."/>
            <person name="Yang F."/>
            <person name="Holt I.E."/>
            <person name="Umayam L.A."/>
            <person name="Mason T.M."/>
            <person name="Brenner M."/>
            <person name="Shea T.P."/>
            <person name="Parksey D.S."/>
            <person name="Nierman W.C."/>
            <person name="Feldblyum T.V."/>
            <person name="Hansen C.L."/>
            <person name="Craven M.B."/>
            <person name="Radune D."/>
            <person name="Vamathevan J.J."/>
            <person name="Khouri H.M."/>
            <person name="White O."/>
            <person name="Gruber T.M."/>
            <person name="Ketchum K.A."/>
            <person name="Venter J.C."/>
            <person name="Tettelin H."/>
            <person name="Bryant D.A."/>
            <person name="Fraser C.M."/>
        </authorList>
    </citation>
    <scope>NUCLEOTIDE SEQUENCE [LARGE SCALE GENOMIC DNA]</scope>
    <source>
        <strain>ATCC 49652 / DSM 12025 / NBRC 103806 / TLS</strain>
    </source>
</reference>
<name>PSD_CHLTE</name>
<evidence type="ECO:0000255" key="1">
    <source>
        <dbReference type="HAMAP-Rule" id="MF_00664"/>
    </source>
</evidence>
<protein>
    <recommendedName>
        <fullName evidence="1">Phosphatidylserine decarboxylase proenzyme</fullName>
        <ecNumber evidence="1">4.1.1.65</ecNumber>
    </recommendedName>
    <component>
        <recommendedName>
            <fullName evidence="1">Phosphatidylserine decarboxylase alpha chain</fullName>
        </recommendedName>
    </component>
    <component>
        <recommendedName>
            <fullName evidence="1">Phosphatidylserine decarboxylase beta chain</fullName>
        </recommendedName>
    </component>
</protein>
<dbReference type="EC" id="4.1.1.65" evidence="1"/>
<dbReference type="EMBL" id="AY005137">
    <property type="protein sequence ID" value="AAG12422.1"/>
    <property type="molecule type" value="Genomic_DNA"/>
</dbReference>
<dbReference type="EMBL" id="AE006470">
    <property type="protein sequence ID" value="AAM72840.1"/>
    <property type="molecule type" value="Genomic_DNA"/>
</dbReference>
<dbReference type="RefSeq" id="NP_662498.1">
    <property type="nucleotide sequence ID" value="NC_002932.3"/>
</dbReference>
<dbReference type="RefSeq" id="WP_010933279.1">
    <property type="nucleotide sequence ID" value="NC_002932.3"/>
</dbReference>
<dbReference type="SMR" id="Q93SU4"/>
<dbReference type="STRING" id="194439.CT1615"/>
<dbReference type="EnsemblBacteria" id="AAM72840">
    <property type="protein sequence ID" value="AAM72840"/>
    <property type="gene ID" value="CT1615"/>
</dbReference>
<dbReference type="KEGG" id="cte:CT1615"/>
<dbReference type="PATRIC" id="fig|194439.7.peg.1460"/>
<dbReference type="eggNOG" id="COG0688">
    <property type="taxonomic scope" value="Bacteria"/>
</dbReference>
<dbReference type="HOGENOM" id="CLU_072492_2_0_10"/>
<dbReference type="OrthoDB" id="9790893at2"/>
<dbReference type="UniPathway" id="UPA00558">
    <property type="reaction ID" value="UER00616"/>
</dbReference>
<dbReference type="Proteomes" id="UP000001007">
    <property type="component" value="Chromosome"/>
</dbReference>
<dbReference type="GO" id="GO:0005886">
    <property type="term" value="C:plasma membrane"/>
    <property type="evidence" value="ECO:0007669"/>
    <property type="project" value="UniProtKB-SubCell"/>
</dbReference>
<dbReference type="GO" id="GO:0004609">
    <property type="term" value="F:phosphatidylserine decarboxylase activity"/>
    <property type="evidence" value="ECO:0007669"/>
    <property type="project" value="UniProtKB-UniRule"/>
</dbReference>
<dbReference type="GO" id="GO:0006646">
    <property type="term" value="P:phosphatidylethanolamine biosynthetic process"/>
    <property type="evidence" value="ECO:0007669"/>
    <property type="project" value="UniProtKB-UniRule"/>
</dbReference>
<dbReference type="HAMAP" id="MF_00664">
    <property type="entry name" value="PS_decarb_PSD_A"/>
    <property type="match status" value="1"/>
</dbReference>
<dbReference type="InterPro" id="IPR003817">
    <property type="entry name" value="PS_Dcarbxylase"/>
</dbReference>
<dbReference type="InterPro" id="IPR033175">
    <property type="entry name" value="PSD-A"/>
</dbReference>
<dbReference type="NCBIfam" id="NF003678">
    <property type="entry name" value="PRK05305.1-2"/>
    <property type="match status" value="1"/>
</dbReference>
<dbReference type="NCBIfam" id="NF003682">
    <property type="entry name" value="PRK05305.2-2"/>
    <property type="match status" value="1"/>
</dbReference>
<dbReference type="NCBIfam" id="NF003685">
    <property type="entry name" value="PRK05305.2-5"/>
    <property type="match status" value="1"/>
</dbReference>
<dbReference type="PANTHER" id="PTHR35809">
    <property type="entry name" value="ARCHAETIDYLSERINE DECARBOXYLASE PROENZYME-RELATED"/>
    <property type="match status" value="1"/>
</dbReference>
<dbReference type="PANTHER" id="PTHR35809:SF1">
    <property type="entry name" value="ARCHAETIDYLSERINE DECARBOXYLASE PROENZYME-RELATED"/>
    <property type="match status" value="1"/>
</dbReference>
<dbReference type="Pfam" id="PF02666">
    <property type="entry name" value="PS_Dcarbxylase"/>
    <property type="match status" value="1"/>
</dbReference>
<organism>
    <name type="scientific">Chlorobaculum tepidum (strain ATCC 49652 / DSM 12025 / NBRC 103806 / TLS)</name>
    <name type="common">Chlorobium tepidum</name>
    <dbReference type="NCBI Taxonomy" id="194439"/>
    <lineage>
        <taxon>Bacteria</taxon>
        <taxon>Pseudomonadati</taxon>
        <taxon>Chlorobiota</taxon>
        <taxon>Chlorobiia</taxon>
        <taxon>Chlorobiales</taxon>
        <taxon>Chlorobiaceae</taxon>
        <taxon>Chlorobaculum</taxon>
    </lineage>
</organism>